<accession>Q02253</accession>
<proteinExistence type="evidence at protein level"/>
<keyword id="KW-0007">Acetylation</keyword>
<keyword id="KW-0903">Direct protein sequencing</keyword>
<keyword id="KW-0496">Mitochondrion</keyword>
<keyword id="KW-0520">NAD</keyword>
<keyword id="KW-0560">Oxidoreductase</keyword>
<keyword id="KW-0597">Phosphoprotein</keyword>
<keyword id="KW-1185">Reference proteome</keyword>
<keyword id="KW-0809">Transit peptide</keyword>
<sequence>MAAAVAAAAAVRSRILQVSSKVNSTWYPASSFSSSSVPTVKLFIDGKFVESKSDKWIDIHNPATNEVVGRVPQSTKAEMEAAVAACKRAFPAWADTSILSRQQVLLRYQQLIKENLKEIARLITLEQGKTLADAEGDVFRGLQVVEHACSVTSLMLGETMPSITKDMDLYSYRLPLGVCAGIAPFNFPAMIPLWMFPMAMVCGNTFLMKPSERVPGATMLLAKLLQDSGAPDGTLNIIHGQHEAVNFICDHPDIKAISFVGSNQAGEYIFERGSRNGKRVQANMGAKNHGVVMPDANKENTLNQLVGAAFGAAGQRCMALSTAVLVGEAKKWLPELVERAKNLRVNAGDQPGADLGPLITPQAKERVCNLIDSGAKEGASILLDGRKIKVKGYENGNFVGPTIISNVKPSMTCYKEEIFGPVLVVLETETLDEAIKIVNDNPYGNGTAIFTTNGAIARKYAHMVDVGQVGVNVPIPVPLPMFSFTGSRSSFRGDTNFYGKQGIQFYTQLKTITSQWKEEDATLSSPAVVMPTMGR</sequence>
<gene>
    <name evidence="12" type="primary">Aldh6a1</name>
    <name type="synonym">Mmsdh</name>
</gene>
<dbReference type="EC" id="1.2.1.27" evidence="5 8"/>
<dbReference type="EMBL" id="M93401">
    <property type="protein sequence ID" value="AAA41638.1"/>
    <property type="molecule type" value="mRNA"/>
</dbReference>
<dbReference type="PIR" id="A44097">
    <property type="entry name" value="A44097"/>
</dbReference>
<dbReference type="RefSeq" id="NP_112319.2">
    <property type="nucleotide sequence ID" value="NM_031057.2"/>
</dbReference>
<dbReference type="SMR" id="Q02253"/>
<dbReference type="BioGRID" id="249586">
    <property type="interactions" value="1"/>
</dbReference>
<dbReference type="FunCoup" id="Q02253">
    <property type="interactions" value="1941"/>
</dbReference>
<dbReference type="IntAct" id="Q02253">
    <property type="interactions" value="2"/>
</dbReference>
<dbReference type="STRING" id="10116.ENSRNOP00000015545"/>
<dbReference type="CarbonylDB" id="Q02253"/>
<dbReference type="GlyGen" id="Q02253">
    <property type="glycosylation" value="5 sites, 1 O-linked glycan (4 sites)"/>
</dbReference>
<dbReference type="iPTMnet" id="Q02253"/>
<dbReference type="PhosphoSitePlus" id="Q02253"/>
<dbReference type="jPOST" id="Q02253"/>
<dbReference type="PaxDb" id="10116-ENSRNOP00000015545"/>
<dbReference type="GeneID" id="81708"/>
<dbReference type="KEGG" id="rno:81708"/>
<dbReference type="UCSC" id="RGD:621556">
    <property type="organism name" value="rat"/>
</dbReference>
<dbReference type="AGR" id="RGD:621556"/>
<dbReference type="CTD" id="4329"/>
<dbReference type="RGD" id="621556">
    <property type="gene designation" value="Aldh6a1"/>
</dbReference>
<dbReference type="eggNOG" id="KOG2449">
    <property type="taxonomic scope" value="Eukaryota"/>
</dbReference>
<dbReference type="InParanoid" id="Q02253"/>
<dbReference type="OrthoDB" id="310895at2759"/>
<dbReference type="PhylomeDB" id="Q02253"/>
<dbReference type="Reactome" id="R-RNO-70895">
    <property type="pathway name" value="Branched-chain amino acid catabolism"/>
</dbReference>
<dbReference type="SABIO-RK" id="Q02253"/>
<dbReference type="PRO" id="PR:Q02253"/>
<dbReference type="Proteomes" id="UP000002494">
    <property type="component" value="Unplaced"/>
</dbReference>
<dbReference type="GO" id="GO:0005739">
    <property type="term" value="C:mitochondrion"/>
    <property type="evidence" value="ECO:0000318"/>
    <property type="project" value="GO_Central"/>
</dbReference>
<dbReference type="GO" id="GO:0018478">
    <property type="term" value="F:malonate-semialdehyde dehydrogenase (acetylating) activity"/>
    <property type="evidence" value="ECO:0007669"/>
    <property type="project" value="UniProtKB-EC"/>
</dbReference>
<dbReference type="GO" id="GO:0004491">
    <property type="term" value="F:methylmalonate-semialdehyde dehydrogenase (acylating, NAD) activity"/>
    <property type="evidence" value="ECO:0000314"/>
    <property type="project" value="UniProtKB"/>
</dbReference>
<dbReference type="GO" id="GO:0016790">
    <property type="term" value="F:thiolester hydrolase activity"/>
    <property type="evidence" value="ECO:0000314"/>
    <property type="project" value="RGD"/>
</dbReference>
<dbReference type="GO" id="GO:0019484">
    <property type="term" value="P:beta-alanine catabolic process"/>
    <property type="evidence" value="ECO:0000314"/>
    <property type="project" value="RGD"/>
</dbReference>
<dbReference type="GO" id="GO:0050873">
    <property type="term" value="P:brown fat cell differentiation"/>
    <property type="evidence" value="ECO:0000266"/>
    <property type="project" value="RGD"/>
</dbReference>
<dbReference type="GO" id="GO:0006210">
    <property type="term" value="P:thymine catabolic process"/>
    <property type="evidence" value="ECO:0000314"/>
    <property type="project" value="RGD"/>
</dbReference>
<dbReference type="GO" id="GO:0019859">
    <property type="term" value="P:thymine metabolic process"/>
    <property type="evidence" value="ECO:0000314"/>
    <property type="project" value="UniProtKB"/>
</dbReference>
<dbReference type="GO" id="GO:0006574">
    <property type="term" value="P:valine catabolic process"/>
    <property type="evidence" value="ECO:0000314"/>
    <property type="project" value="RGD"/>
</dbReference>
<dbReference type="GO" id="GO:0006573">
    <property type="term" value="P:valine metabolic process"/>
    <property type="evidence" value="ECO:0000314"/>
    <property type="project" value="UniProtKB"/>
</dbReference>
<dbReference type="CDD" id="cd07085">
    <property type="entry name" value="ALDH_F6_MMSDH"/>
    <property type="match status" value="1"/>
</dbReference>
<dbReference type="FunFam" id="3.40.309.10:FF:000002">
    <property type="entry name" value="Methylmalonate-semialdehyde dehydrogenase (Acylating)"/>
    <property type="match status" value="1"/>
</dbReference>
<dbReference type="FunFam" id="3.40.605.10:FF:000003">
    <property type="entry name" value="Methylmalonate-semialdehyde dehydrogenase [acylating]"/>
    <property type="match status" value="1"/>
</dbReference>
<dbReference type="Gene3D" id="3.40.605.10">
    <property type="entry name" value="Aldehyde Dehydrogenase, Chain A, domain 1"/>
    <property type="match status" value="1"/>
</dbReference>
<dbReference type="Gene3D" id="3.40.309.10">
    <property type="entry name" value="Aldehyde Dehydrogenase, Chain A, domain 2"/>
    <property type="match status" value="1"/>
</dbReference>
<dbReference type="InterPro" id="IPR016161">
    <property type="entry name" value="Ald_DH/histidinol_DH"/>
</dbReference>
<dbReference type="InterPro" id="IPR016163">
    <property type="entry name" value="Ald_DH_C"/>
</dbReference>
<dbReference type="InterPro" id="IPR016160">
    <property type="entry name" value="Ald_DH_CS_CYS"/>
</dbReference>
<dbReference type="InterPro" id="IPR016162">
    <property type="entry name" value="Ald_DH_N"/>
</dbReference>
<dbReference type="InterPro" id="IPR015590">
    <property type="entry name" value="Aldehyde_DH_dom"/>
</dbReference>
<dbReference type="InterPro" id="IPR010061">
    <property type="entry name" value="MeMal-semiAld_DH"/>
</dbReference>
<dbReference type="NCBIfam" id="TIGR01722">
    <property type="entry name" value="MMSDH"/>
    <property type="match status" value="1"/>
</dbReference>
<dbReference type="PANTHER" id="PTHR43866">
    <property type="entry name" value="MALONATE-SEMIALDEHYDE DEHYDROGENASE"/>
    <property type="match status" value="1"/>
</dbReference>
<dbReference type="PANTHER" id="PTHR43866:SF3">
    <property type="entry name" value="METHYLMALONATE-SEMIALDEHYDE DEHYDROGENASE [ACYLATING], MITOCHONDRIAL"/>
    <property type="match status" value="1"/>
</dbReference>
<dbReference type="Pfam" id="PF00171">
    <property type="entry name" value="Aldedh"/>
    <property type="match status" value="1"/>
</dbReference>
<dbReference type="SUPFAM" id="SSF53720">
    <property type="entry name" value="ALDH-like"/>
    <property type="match status" value="1"/>
</dbReference>
<dbReference type="PROSITE" id="PS00070">
    <property type="entry name" value="ALDEHYDE_DEHYDR_CYS"/>
    <property type="match status" value="1"/>
</dbReference>
<protein>
    <recommendedName>
        <fullName evidence="11">Methylmalonate-semialdehyde/malonate-semialdehyde dehydrogenase [acylating], mitochondrial</fullName>
        <shortName evidence="9">MMSDH</shortName>
        <ecNumber evidence="5 8">1.2.1.27</ecNumber>
    </recommendedName>
    <alternativeName>
        <fullName evidence="12">Aldehyde dehydrogenase family 6 member A1</fullName>
    </alternativeName>
</protein>
<evidence type="ECO:0000250" key="1">
    <source>
        <dbReference type="UniProtKB" id="P42412"/>
    </source>
</evidence>
<evidence type="ECO:0000250" key="2">
    <source>
        <dbReference type="UniProtKB" id="Q02252"/>
    </source>
</evidence>
<evidence type="ECO:0000250" key="3">
    <source>
        <dbReference type="UniProtKB" id="Q9EQ20"/>
    </source>
</evidence>
<evidence type="ECO:0000255" key="4">
    <source>
        <dbReference type="PROSITE-ProRule" id="PRU10008"/>
    </source>
</evidence>
<evidence type="ECO:0000269" key="5">
    <source>
    </source>
</evidence>
<evidence type="ECO:0000269" key="6">
    <source>
    </source>
</evidence>
<evidence type="ECO:0000269" key="7">
    <source>
    </source>
</evidence>
<evidence type="ECO:0000269" key="8">
    <source>
    </source>
</evidence>
<evidence type="ECO:0000303" key="9">
    <source>
    </source>
</evidence>
<evidence type="ECO:0000305" key="10"/>
<evidence type="ECO:0000305" key="11">
    <source>
    </source>
</evidence>
<evidence type="ECO:0000312" key="12">
    <source>
        <dbReference type="RGD" id="621556"/>
    </source>
</evidence>
<feature type="transit peptide" description="Mitochondrion" evidence="5 6 8">
    <location>
        <begin position="1"/>
        <end position="32"/>
    </location>
</feature>
<feature type="chain" id="PRO_0000007190" description="Methylmalonate-semialdehyde/malonate-semialdehyde dehydrogenase [acylating], mitochondrial">
    <location>
        <begin position="33"/>
        <end position="535"/>
    </location>
</feature>
<feature type="active site" description="Nucleophile" evidence="4">
    <location>
        <position position="317"/>
    </location>
</feature>
<feature type="binding site" evidence="1">
    <location>
        <position position="183"/>
    </location>
    <ligand>
        <name>NAD(+)</name>
        <dbReference type="ChEBI" id="CHEBI:57540"/>
    </ligand>
</feature>
<feature type="binding site" evidence="1">
    <location>
        <position position="185"/>
    </location>
    <ligand>
        <name>NAD(+)</name>
        <dbReference type="ChEBI" id="CHEBI:57540"/>
    </ligand>
</feature>
<feature type="binding site" evidence="1">
    <location>
        <position position="209"/>
    </location>
    <ligand>
        <name>NAD(+)</name>
        <dbReference type="ChEBI" id="CHEBI:57540"/>
    </ligand>
</feature>
<feature type="binding site" evidence="1">
    <location>
        <position position="212"/>
    </location>
    <ligand>
        <name>NAD(+)</name>
        <dbReference type="ChEBI" id="CHEBI:57540"/>
    </ligand>
</feature>
<feature type="binding site" evidence="1">
    <location>
        <position position="213"/>
    </location>
    <ligand>
        <name>NAD(+)</name>
        <dbReference type="ChEBI" id="CHEBI:57540"/>
    </ligand>
</feature>
<feature type="binding site" evidence="1">
    <location>
        <position position="262"/>
    </location>
    <ligand>
        <name>NAD(+)</name>
        <dbReference type="ChEBI" id="CHEBI:57540"/>
    </ligand>
</feature>
<feature type="binding site" evidence="1">
    <location>
        <position position="417"/>
    </location>
    <ligand>
        <name>NAD(+)</name>
        <dbReference type="ChEBI" id="CHEBI:57540"/>
    </ligand>
</feature>
<feature type="modified residue" description="N6-acetyllysine; alternate" evidence="3">
    <location>
        <position position="47"/>
    </location>
</feature>
<feature type="modified residue" description="N6-succinyllysine; alternate" evidence="3">
    <location>
        <position position="47"/>
    </location>
</feature>
<feature type="modified residue" description="N6-acetyllysine; alternate" evidence="3">
    <location>
        <position position="52"/>
    </location>
</feature>
<feature type="modified residue" description="N6-succinyllysine; alternate" evidence="3">
    <location>
        <position position="52"/>
    </location>
</feature>
<feature type="modified residue" description="N6-acetyllysine; alternate" evidence="3">
    <location>
        <position position="55"/>
    </location>
</feature>
<feature type="modified residue" description="N6-succinyllysine; alternate" evidence="3">
    <location>
        <position position="55"/>
    </location>
</feature>
<feature type="modified residue" description="N6-acetyllysine; alternate" evidence="3">
    <location>
        <position position="76"/>
    </location>
</feature>
<feature type="modified residue" description="N6-succinyllysine; alternate" evidence="3">
    <location>
        <position position="76"/>
    </location>
</feature>
<feature type="modified residue" description="N6-acetyllysine" evidence="3">
    <location>
        <position position="87"/>
    </location>
</feature>
<feature type="modified residue" description="N6-acetyllysine; alternate" evidence="3">
    <location>
        <position position="117"/>
    </location>
</feature>
<feature type="modified residue" description="N6-succinyllysine; alternate" evidence="3">
    <location>
        <position position="117"/>
    </location>
</feature>
<feature type="modified residue" description="N6-acetyllysine; alternate" evidence="3">
    <location>
        <position position="129"/>
    </location>
</feature>
<feature type="modified residue" description="N6-succinyllysine; alternate" evidence="3">
    <location>
        <position position="129"/>
    </location>
</feature>
<feature type="modified residue" description="Phosphoserine" evidence="2">
    <location>
        <position position="262"/>
    </location>
</feature>
<feature type="modified residue" description="N6-acetyllysine" evidence="3">
    <location>
        <position position="298"/>
    </location>
</feature>
<feature type="modified residue" description="N6-acetyllysine" evidence="3">
    <location>
        <position position="330"/>
    </location>
</feature>
<feature type="modified residue" description="N6-acetyllysine" evidence="3">
    <location>
        <position position="331"/>
    </location>
</feature>
<feature type="modified residue" description="N6-acetyllysine; alternate" evidence="3">
    <location>
        <position position="364"/>
    </location>
</feature>
<feature type="modified residue" description="N6-succinyllysine; alternate" evidence="3">
    <location>
        <position position="364"/>
    </location>
</feature>
<feature type="modified residue" description="N6-acetyllysine; alternate" evidence="3">
    <location>
        <position position="376"/>
    </location>
</feature>
<feature type="modified residue" description="N6-succinyllysine; alternate" evidence="3">
    <location>
        <position position="376"/>
    </location>
</feature>
<feature type="modified residue" description="Phosphoserine" evidence="2">
    <location>
        <position position="380"/>
    </location>
</feature>
<feature type="modified residue" description="N6-succinyllysine" evidence="3">
    <location>
        <position position="391"/>
    </location>
</feature>
<feature type="modified residue" description="N6-acetyllysine" evidence="3">
    <location>
        <position position="500"/>
    </location>
</feature>
<feature type="modified residue" description="N6-succinyllysine" evidence="3">
    <location>
        <position position="517"/>
    </location>
</feature>
<feature type="sequence conflict" description="In Ref. 1; AA sequence." evidence="10" ref="1">
    <original>D</original>
    <variation>N</variation>
    <location>
        <position position="45"/>
    </location>
</feature>
<feature type="sequence conflict" description="In Ref. 1; AA sequence." evidence="10" ref="1">
    <original>E</original>
    <variation>Q</variation>
    <location>
        <position position="50"/>
    </location>
</feature>
<feature type="sequence conflict" description="In Ref. 1; AA sequence." evidence="10" ref="1">
    <original>D</original>
    <variation>N</variation>
    <location>
        <position position="166"/>
    </location>
</feature>
<feature type="sequence conflict" description="In Ref. 1; AA sequence." evidence="10" ref="1">
    <original>D</original>
    <variation>N</variation>
    <location>
        <position position="168"/>
    </location>
</feature>
<feature type="sequence conflict" description="In Ref. 1; AA sequence." evidence="10" ref="1">
    <original>P</original>
    <variation>T</variation>
    <location>
        <position position="184"/>
    </location>
</feature>
<feature type="sequence conflict" description="In Ref. 1; AA sequence." evidence="10" ref="1">
    <original>M</original>
    <variation>G</variation>
    <location>
        <position position="190"/>
    </location>
</feature>
<reference key="1">
    <citation type="journal article" date="1992" name="J. Biol. Chem.">
        <title>CoA-dependent methylmalonate-semialdehyde dehydrogenase, a unique member of the aldehyde dehydrogenase superfamily. cDNA cloning, evolutionary relationships, and tissue distribution.</title>
        <authorList>
            <person name="Kedishvili N.Y."/>
            <person name="Popov K.M."/>
            <person name="Rougraff P.M."/>
            <person name="Zhao Y."/>
            <person name="Crabb D.W."/>
            <person name="Harris R.A."/>
        </authorList>
    </citation>
    <scope>NUCLEOTIDE SEQUENCE [MRNA]</scope>
    <scope>PROTEIN SEQUENCE OF 33-50 AND 166-190</scope>
    <scope>FUNCTION</scope>
    <scope>CATALYTIC ACTIVITY</scope>
    <source>
        <tissue>Liver</tissue>
    </source>
</reference>
<reference key="2">
    <citation type="journal article" date="1989" name="J. Biol. Chem.">
        <title>Purification and characterization of methylmalonate-semialdehyde dehydrogenase from rat liver. Identity to malonate-semialdehyde dehydrogenase.</title>
        <authorList>
            <person name="Goodwin G.W."/>
            <person name="Rougraff P.M."/>
            <person name="Davis E.J."/>
            <person name="Harris R.A."/>
        </authorList>
    </citation>
    <scope>PROTEIN SEQUENCE OF 33-50</scope>
    <scope>FUNCTION</scope>
    <scope>CATALYTIC ACTIVITY</scope>
    <scope>BIOPHYSICOCHEMICAL PROPERTIES</scope>
    <scope>SUBUNIT</scope>
    <scope>SUBCELLULAR LOCATION</scope>
</reference>
<reference key="3">
    <citation type="journal article" date="1991" name="Arch. Biochem. Biophys.">
        <title>The effect of ligand binding on the proteolytic pattern of methylmalonate semialdehyde dehydrogenase.</title>
        <authorList>
            <person name="Kedishvili N.Y."/>
            <person name="Popov K.M."/>
            <person name="Harris R.A."/>
        </authorList>
    </citation>
    <scope>PROTEIN SEQUENCE OF N-TERMINUS</scope>
</reference>
<reference key="4">
    <citation type="submission" date="2006-11" db="UniProtKB">
        <authorList>
            <person name="Lubec G."/>
            <person name="Afjehi-Sadat L."/>
        </authorList>
    </citation>
    <scope>PROTEIN SEQUENCE OF 56-70</scope>
    <scope>IDENTIFICATION BY MASS SPECTROMETRY</scope>
    <source>
        <strain>Sprague-Dawley</strain>
        <tissue>Spinal cord</tissue>
    </source>
</reference>
<reference key="5">
    <citation type="journal article" date="2011" name="J. Androl.">
        <title>Differential proteomics leads to identification of domain specific epididymal sperm proteins.</title>
        <authorList>
            <person name="Suryawanshi A.R."/>
            <person name="Khan S.A."/>
            <person name="Gajbhiye R.K."/>
            <person name="Gurav M.Y."/>
            <person name="Khole V.V."/>
        </authorList>
    </citation>
    <scope>IDENTIFICATION BY MASS SPECTROMETRY</scope>
    <scope>TISSUE SPECIFICITY</scope>
    <source>
        <strain>Holtzman</strain>
        <tissue>Sperm</tissue>
    </source>
</reference>
<comment type="function">
    <text evidence="8">Malonate and methylmalonate semialdehyde dehydrogenase involved in the catabolism of valine, thymine, and compounds catabolized by way of beta-alanine, including uracil and cytidine.</text>
</comment>
<comment type="catalytic activity">
    <reaction evidence="5 8">
        <text>3-oxopropanoate + NAD(+) + CoA + H2O = hydrogencarbonate + acetyl-CoA + NADH + H(+)</text>
        <dbReference type="Rhea" id="RHEA:76615"/>
        <dbReference type="ChEBI" id="CHEBI:15377"/>
        <dbReference type="ChEBI" id="CHEBI:15378"/>
        <dbReference type="ChEBI" id="CHEBI:17544"/>
        <dbReference type="ChEBI" id="CHEBI:33190"/>
        <dbReference type="ChEBI" id="CHEBI:57287"/>
        <dbReference type="ChEBI" id="CHEBI:57288"/>
        <dbReference type="ChEBI" id="CHEBI:57540"/>
        <dbReference type="ChEBI" id="CHEBI:57945"/>
        <dbReference type="EC" id="1.2.1.27"/>
    </reaction>
    <physiologicalReaction direction="left-to-right" evidence="11">
        <dbReference type="Rhea" id="RHEA:76616"/>
    </physiologicalReaction>
</comment>
<comment type="catalytic activity">
    <reaction evidence="8">
        <text>2-methyl-3-oxopropanoate + NAD(+) + CoA + H2O = propanoyl-CoA + hydrogencarbonate + NADH + H(+)</text>
        <dbReference type="Rhea" id="RHEA:20804"/>
        <dbReference type="ChEBI" id="CHEBI:15377"/>
        <dbReference type="ChEBI" id="CHEBI:15378"/>
        <dbReference type="ChEBI" id="CHEBI:17544"/>
        <dbReference type="ChEBI" id="CHEBI:57287"/>
        <dbReference type="ChEBI" id="CHEBI:57392"/>
        <dbReference type="ChEBI" id="CHEBI:57540"/>
        <dbReference type="ChEBI" id="CHEBI:57700"/>
        <dbReference type="ChEBI" id="CHEBI:57945"/>
        <dbReference type="EC" id="1.2.1.27"/>
    </reaction>
    <physiologicalReaction direction="left-to-right" evidence="11">
        <dbReference type="Rhea" id="RHEA:20805"/>
    </physiologicalReaction>
</comment>
<comment type="catalytic activity">
    <reaction evidence="8">
        <text>(R)-2-methyl-3-oxopropanoate + NAD(+) + CoA + H2O = propanoyl-CoA + hydrogencarbonate + NADH + H(+)</text>
        <dbReference type="Rhea" id="RHEA:76623"/>
        <dbReference type="ChEBI" id="CHEBI:15377"/>
        <dbReference type="ChEBI" id="CHEBI:15378"/>
        <dbReference type="ChEBI" id="CHEBI:17544"/>
        <dbReference type="ChEBI" id="CHEBI:57287"/>
        <dbReference type="ChEBI" id="CHEBI:57392"/>
        <dbReference type="ChEBI" id="CHEBI:57540"/>
        <dbReference type="ChEBI" id="CHEBI:57945"/>
        <dbReference type="ChEBI" id="CHEBI:141212"/>
    </reaction>
    <physiologicalReaction direction="left-to-right" evidence="11">
        <dbReference type="Rhea" id="RHEA:76624"/>
    </physiologicalReaction>
</comment>
<comment type="catalytic activity">
    <reaction evidence="8">
        <text>(S)-2-methyl-3-oxopropanoate + NAD(+) + CoA + H2O = propanoyl-CoA + hydrogencarbonate + NADH + H(+)</text>
        <dbReference type="Rhea" id="RHEA:76627"/>
        <dbReference type="ChEBI" id="CHEBI:15377"/>
        <dbReference type="ChEBI" id="CHEBI:15378"/>
        <dbReference type="ChEBI" id="CHEBI:17544"/>
        <dbReference type="ChEBI" id="CHEBI:57287"/>
        <dbReference type="ChEBI" id="CHEBI:57392"/>
        <dbReference type="ChEBI" id="CHEBI:57540"/>
        <dbReference type="ChEBI" id="CHEBI:57945"/>
        <dbReference type="ChEBI" id="CHEBI:62413"/>
    </reaction>
    <physiologicalReaction direction="left-to-right" evidence="11">
        <dbReference type="Rhea" id="RHEA:76628"/>
    </physiologicalReaction>
</comment>
<comment type="biophysicochemical properties">
    <kinetics>
        <KM evidence="8">5.3 uM for 2-methyl-3-oxopropanoate</KM>
        <KM evidence="8">9.4 uM for 3-oxopropanoate</KM>
        <KM evidence="8">150 uM for NAD(+)</KM>
        <KM evidence="8">30 uM for CoA</KM>
    </kinetics>
    <phDependence>
        <text evidence="8">Optimum pH is 8.</text>
    </phDependence>
</comment>
<comment type="subunit">
    <text evidence="8">Homotetramer.</text>
</comment>
<comment type="subcellular location">
    <subcellularLocation>
        <location evidence="11">Mitochondrion</location>
    </subcellularLocation>
</comment>
<comment type="tissue specificity">
    <text evidence="7">Expressed in the head and flagellum of epididymal sperm but not in testicular sperm (at protein level). Kidney &gt; liver &gt; heart &gt; muscle &gt; brain.</text>
</comment>
<comment type="similarity">
    <text evidence="10">Belongs to the aldehyde dehydrogenase family.</text>
</comment>
<organism>
    <name type="scientific">Rattus norvegicus</name>
    <name type="common">Rat</name>
    <dbReference type="NCBI Taxonomy" id="10116"/>
    <lineage>
        <taxon>Eukaryota</taxon>
        <taxon>Metazoa</taxon>
        <taxon>Chordata</taxon>
        <taxon>Craniata</taxon>
        <taxon>Vertebrata</taxon>
        <taxon>Euteleostomi</taxon>
        <taxon>Mammalia</taxon>
        <taxon>Eutheria</taxon>
        <taxon>Euarchontoglires</taxon>
        <taxon>Glires</taxon>
        <taxon>Rodentia</taxon>
        <taxon>Myomorpha</taxon>
        <taxon>Muroidea</taxon>
        <taxon>Muridae</taxon>
        <taxon>Murinae</taxon>
        <taxon>Rattus</taxon>
    </lineage>
</organism>
<name>MMSA_RAT</name>